<feature type="chain" id="PRO_0000153561" description="Small ribosomal subunit protein eS1">
    <location>
        <begin position="1"/>
        <end position="208"/>
    </location>
</feature>
<keyword id="KW-0002">3D-structure</keyword>
<keyword id="KW-1185">Reference proteome</keyword>
<keyword id="KW-0687">Ribonucleoprotein</keyword>
<keyword id="KW-0689">Ribosomal protein</keyword>
<comment type="similarity">
    <text evidence="1">Belongs to the eukaryotic ribosomal protein eS1 family.</text>
</comment>
<evidence type="ECO:0000255" key="1">
    <source>
        <dbReference type="HAMAP-Rule" id="MF_00359"/>
    </source>
</evidence>
<evidence type="ECO:0000305" key="2"/>
<reference key="1">
    <citation type="journal article" date="2000" name="Genome">
        <title>Gene content and organization of a 281-kbp contig from the genome of the extremely thermophilic archaeon, Sulfolobus solfataricus P2.</title>
        <authorList>
            <person name="Charlebois R.L."/>
            <person name="Singh R.K."/>
            <person name="Chan-Weiher C.C.-Y."/>
            <person name="Allard G."/>
            <person name="Chow C."/>
            <person name="Confalonieri F."/>
            <person name="Curtis B."/>
            <person name="Duguet M."/>
            <person name="Erauso G."/>
            <person name="Faguy D."/>
            <person name="Gaasterland T."/>
            <person name="Garrett R.A."/>
            <person name="Gordon P."/>
            <person name="Jeffries A.C."/>
            <person name="Kozera C."/>
            <person name="Kushwaha N."/>
            <person name="Lafleur E."/>
            <person name="Medina N."/>
            <person name="Peng X."/>
            <person name="Penny S.L."/>
            <person name="She Q."/>
            <person name="St Jean A."/>
            <person name="van der Oost J."/>
            <person name="Young F."/>
            <person name="Zivanovic Y."/>
            <person name="Doolittle W.F."/>
            <person name="Ragan M.A."/>
            <person name="Sensen C.W."/>
        </authorList>
    </citation>
    <scope>NUCLEOTIDE SEQUENCE [LARGE SCALE GENOMIC DNA]</scope>
    <source>
        <strain>ATCC 35092 / DSM 1617 / JCM 11322 / P2</strain>
    </source>
</reference>
<reference key="2">
    <citation type="journal article" date="2001" name="Proc. Natl. Acad. Sci. U.S.A.">
        <title>The complete genome of the crenarchaeon Sulfolobus solfataricus P2.</title>
        <authorList>
            <person name="She Q."/>
            <person name="Singh R.K."/>
            <person name="Confalonieri F."/>
            <person name="Zivanovic Y."/>
            <person name="Allard G."/>
            <person name="Awayez M.J."/>
            <person name="Chan-Weiher C.C.-Y."/>
            <person name="Clausen I.G."/>
            <person name="Curtis B.A."/>
            <person name="De Moors A."/>
            <person name="Erauso G."/>
            <person name="Fletcher C."/>
            <person name="Gordon P.M.K."/>
            <person name="Heikamp-de Jong I."/>
            <person name="Jeffries A.C."/>
            <person name="Kozera C.J."/>
            <person name="Medina N."/>
            <person name="Peng X."/>
            <person name="Thi-Ngoc H.P."/>
            <person name="Redder P."/>
            <person name="Schenk M.E."/>
            <person name="Theriault C."/>
            <person name="Tolstrup N."/>
            <person name="Charlebois R.L."/>
            <person name="Doolittle W.F."/>
            <person name="Duguet M."/>
            <person name="Gaasterland T."/>
            <person name="Garrett R.A."/>
            <person name="Ragan M.A."/>
            <person name="Sensen C.W."/>
            <person name="Van der Oost J."/>
        </authorList>
    </citation>
    <scope>NUCLEOTIDE SEQUENCE [LARGE SCALE GENOMIC DNA]</scope>
    <source>
        <strain>ATCC 35092 / DSM 1617 / JCM 11322 / P2</strain>
    </source>
</reference>
<gene>
    <name evidence="1" type="primary">rps3ae</name>
    <name type="ordered locus">SSO0746</name>
</gene>
<organism>
    <name type="scientific">Saccharolobus solfataricus (strain ATCC 35092 / DSM 1617 / JCM 11322 / P2)</name>
    <name type="common">Sulfolobus solfataricus</name>
    <dbReference type="NCBI Taxonomy" id="273057"/>
    <lineage>
        <taxon>Archaea</taxon>
        <taxon>Thermoproteota</taxon>
        <taxon>Thermoprotei</taxon>
        <taxon>Sulfolobales</taxon>
        <taxon>Sulfolobaceae</taxon>
        <taxon>Saccharolobus</taxon>
    </lineage>
</organism>
<protein>
    <recommendedName>
        <fullName evidence="1">Small ribosomal subunit protein eS1</fullName>
    </recommendedName>
    <alternativeName>
        <fullName evidence="2">30S ribosomal protein S3Ae</fullName>
    </alternativeName>
    <alternativeName>
        <fullName evidence="1">Ribosomal protein S1e</fullName>
    </alternativeName>
</protein>
<dbReference type="EMBL" id="Y18930">
    <property type="protein sequence ID" value="CAB57557.1"/>
    <property type="molecule type" value="Genomic_DNA"/>
</dbReference>
<dbReference type="EMBL" id="AE006641">
    <property type="protein sequence ID" value="AAK41041.1"/>
    <property type="molecule type" value="Genomic_DNA"/>
</dbReference>
<dbReference type="PIR" id="B90223">
    <property type="entry name" value="B90223"/>
</dbReference>
<dbReference type="RefSeq" id="WP_009991323.1">
    <property type="nucleotide sequence ID" value="NC_002754.1"/>
</dbReference>
<dbReference type="PDB" id="9FHL">
    <property type="method" value="EM"/>
    <property type="resolution" value="2.50 A"/>
    <property type="chains" value="A=1-208"/>
</dbReference>
<dbReference type="PDB" id="9FRA">
    <property type="method" value="EM"/>
    <property type="resolution" value="2.80 A"/>
    <property type="chains" value="A=1-208"/>
</dbReference>
<dbReference type="PDB" id="9FRK">
    <property type="method" value="EM"/>
    <property type="resolution" value="3.00 A"/>
    <property type="chains" value="A=1-208"/>
</dbReference>
<dbReference type="PDB" id="9FRL">
    <property type="method" value="EM"/>
    <property type="resolution" value="2.97 A"/>
    <property type="chains" value="A=1-208"/>
</dbReference>
<dbReference type="PDB" id="9FS6">
    <property type="method" value="EM"/>
    <property type="resolution" value="2.90 A"/>
    <property type="chains" value="A=1-208"/>
</dbReference>
<dbReference type="PDB" id="9FS8">
    <property type="method" value="EM"/>
    <property type="resolution" value="3.70 A"/>
    <property type="chains" value="A=1-208"/>
</dbReference>
<dbReference type="PDB" id="9FSF">
    <property type="method" value="EM"/>
    <property type="resolution" value="2.80 A"/>
    <property type="chains" value="A=1-208"/>
</dbReference>
<dbReference type="PDB" id="9FY0">
    <property type="method" value="EM"/>
    <property type="resolution" value="2.90 A"/>
    <property type="chains" value="A=1-208"/>
</dbReference>
<dbReference type="PDBsum" id="9FHL"/>
<dbReference type="PDBsum" id="9FRA"/>
<dbReference type="PDBsum" id="9FRK"/>
<dbReference type="PDBsum" id="9FRL"/>
<dbReference type="PDBsum" id="9FS6"/>
<dbReference type="PDBsum" id="9FS8"/>
<dbReference type="PDBsum" id="9FSF"/>
<dbReference type="PDBsum" id="9FY0"/>
<dbReference type="EMDB" id="EMD-50445"/>
<dbReference type="EMDB" id="EMD-50709"/>
<dbReference type="EMDB" id="EMD-50716"/>
<dbReference type="EMDB" id="EMD-50717"/>
<dbReference type="EMDB" id="EMD-50724"/>
<dbReference type="EMDB" id="EMD-50725"/>
<dbReference type="EMDB" id="EMD-50727"/>
<dbReference type="EMDB" id="EMD-50854"/>
<dbReference type="SMR" id="Q9UXD4"/>
<dbReference type="FunCoup" id="Q9UXD4">
    <property type="interactions" value="192"/>
</dbReference>
<dbReference type="STRING" id="273057.SSO0746"/>
<dbReference type="PaxDb" id="273057-SSO0746"/>
<dbReference type="EnsemblBacteria" id="AAK41041">
    <property type="protein sequence ID" value="AAK41041"/>
    <property type="gene ID" value="SSO0746"/>
</dbReference>
<dbReference type="KEGG" id="sso:SSO0746"/>
<dbReference type="PATRIC" id="fig|273057.12.peg.741"/>
<dbReference type="eggNOG" id="arCOG04186">
    <property type="taxonomic scope" value="Archaea"/>
</dbReference>
<dbReference type="HOGENOM" id="CLU_062507_1_0_2"/>
<dbReference type="InParanoid" id="Q9UXD4"/>
<dbReference type="PhylomeDB" id="Q9UXD4"/>
<dbReference type="Proteomes" id="UP000001974">
    <property type="component" value="Chromosome"/>
</dbReference>
<dbReference type="GO" id="GO:0005829">
    <property type="term" value="C:cytosol"/>
    <property type="evidence" value="ECO:0000318"/>
    <property type="project" value="GO_Central"/>
</dbReference>
<dbReference type="GO" id="GO:1990904">
    <property type="term" value="C:ribonucleoprotein complex"/>
    <property type="evidence" value="ECO:0007669"/>
    <property type="project" value="UniProtKB-KW"/>
</dbReference>
<dbReference type="GO" id="GO:0005840">
    <property type="term" value="C:ribosome"/>
    <property type="evidence" value="ECO:0007669"/>
    <property type="project" value="UniProtKB-KW"/>
</dbReference>
<dbReference type="GO" id="GO:0003735">
    <property type="term" value="F:structural constituent of ribosome"/>
    <property type="evidence" value="ECO:0007669"/>
    <property type="project" value="InterPro"/>
</dbReference>
<dbReference type="GO" id="GO:0006412">
    <property type="term" value="P:translation"/>
    <property type="evidence" value="ECO:0007669"/>
    <property type="project" value="UniProtKB-UniRule"/>
</dbReference>
<dbReference type="HAMAP" id="MF_00359">
    <property type="entry name" value="Ribosomal_eS1"/>
    <property type="match status" value="1"/>
</dbReference>
<dbReference type="InterPro" id="IPR001593">
    <property type="entry name" value="Ribosomal_eS1"/>
</dbReference>
<dbReference type="InterPro" id="IPR030838">
    <property type="entry name" value="Ribosomal_eS1_arc"/>
</dbReference>
<dbReference type="NCBIfam" id="NF003142">
    <property type="entry name" value="PRK04057.1"/>
    <property type="match status" value="1"/>
</dbReference>
<dbReference type="PANTHER" id="PTHR11830">
    <property type="entry name" value="40S RIBOSOMAL PROTEIN S3A"/>
    <property type="match status" value="1"/>
</dbReference>
<dbReference type="Pfam" id="PF01015">
    <property type="entry name" value="Ribosomal_S3Ae"/>
    <property type="match status" value="1"/>
</dbReference>
<dbReference type="SMART" id="SM01397">
    <property type="entry name" value="Ribosomal_S3Ae"/>
    <property type="match status" value="1"/>
</dbReference>
<accession>Q9UXD4</accession>
<proteinExistence type="evidence at protein level"/>
<sequence length="208" mass="23542">MSAKGGAIKDKWKMKKWYSVITPKAFGEVSLGSTPAYDITQTIGRRVETTLYDLTGDFSQVYVHLYFKIIGNEGDRLITRFVGHELSRDYLRSLIRRKSSKINSIFDVTTKDGYVVRVKGLVLTTYKCHQSQKTAIRKIINETVSKKASELSFDDFTQEVVFGRLANEIFEAAKKIYPLRKAEIEKTKVLKVPENLGKQVESSSVSSG</sequence>
<name>RS3A_SACS2</name>